<accession>B2I0Q1</accession>
<proteinExistence type="inferred from homology"/>
<sequence>MQNTAKKATLPATALAALGVVFGDIGTSPLYALKESFHAAHGLGIQPENVLGILSIIFWCLMLIISIKYVAIVMRADNNGEGGIMALLALNLRKAKIADNKKIYMIAIGFIGASLFFGDGIITPAISVLSAVEGLSIATDVFDPFIMPIAIAIIVTLFLVQKHGTAFVGKFFGPITLVWFLSLGILGIHSVIQTPVVLGMFSPHWAIQFIYHHPIMTFFVMGAVVLTVTGGEALYADMGHFGPVPIRLAWFFVVLPCLVLNYAGQGALLLRDPAAIENPFYLLVPQWALYPMIIMATMATVIASQAVISGVFSLARQAIQLGYLPRLSIKHTSESEEGQIYVPFLNWLLLIAIIILILIFKTSSNLASAYGLAVTLTMLCDTILVAVFIYSAWKWSLPKVLLLIIPFFILESVLVGATSLKILSGGWVPLLIGAIAVTILMTWKRGRELTFAKLEHDTLSLDLFVKSIGNSVHWVPGDAVFMTGTPNVVPHAMLHNIKHNKVLHQRNILVTVVIEDVPFVAPEERITTETLAEHFFRIKIFYGFKDEMNVPKALMQAYEQLGLEYDLMHISFFISRDRIVHSVGDGMSPWREKLFISMQRNTSPVSDFYQIPTNRVVELGSQIEI</sequence>
<gene>
    <name evidence="1" type="primary">kup</name>
    <name type="ordered locus">ACICU_03448</name>
</gene>
<organism>
    <name type="scientific">Acinetobacter baumannii (strain ACICU)</name>
    <dbReference type="NCBI Taxonomy" id="405416"/>
    <lineage>
        <taxon>Bacteria</taxon>
        <taxon>Pseudomonadati</taxon>
        <taxon>Pseudomonadota</taxon>
        <taxon>Gammaproteobacteria</taxon>
        <taxon>Moraxellales</taxon>
        <taxon>Moraxellaceae</taxon>
        <taxon>Acinetobacter</taxon>
        <taxon>Acinetobacter calcoaceticus/baumannii complex</taxon>
    </lineage>
</organism>
<comment type="function">
    <text evidence="1">Transport of potassium into the cell. Likely operates as a K(+):H(+) symporter.</text>
</comment>
<comment type="catalytic activity">
    <reaction evidence="1">
        <text>K(+)(in) + H(+)(in) = K(+)(out) + H(+)(out)</text>
        <dbReference type="Rhea" id="RHEA:28490"/>
        <dbReference type="ChEBI" id="CHEBI:15378"/>
        <dbReference type="ChEBI" id="CHEBI:29103"/>
    </reaction>
    <physiologicalReaction direction="right-to-left" evidence="1">
        <dbReference type="Rhea" id="RHEA:28492"/>
    </physiologicalReaction>
</comment>
<comment type="subcellular location">
    <subcellularLocation>
        <location evidence="1">Cell inner membrane</location>
        <topology evidence="1">Multi-pass membrane protein</topology>
    </subcellularLocation>
</comment>
<comment type="similarity">
    <text evidence="1">Belongs to the HAK/KUP transporter (TC 2.A.72) family.</text>
</comment>
<dbReference type="EMBL" id="CP000863">
    <property type="protein sequence ID" value="ACC58757.1"/>
    <property type="molecule type" value="Genomic_DNA"/>
</dbReference>
<dbReference type="RefSeq" id="WP_001181667.1">
    <property type="nucleotide sequence ID" value="NZ_CP031380.1"/>
</dbReference>
<dbReference type="KEGG" id="abc:ACICU_03448"/>
<dbReference type="HOGENOM" id="CLU_008142_4_2_6"/>
<dbReference type="Proteomes" id="UP000008839">
    <property type="component" value="Chromosome"/>
</dbReference>
<dbReference type="GO" id="GO:0005886">
    <property type="term" value="C:plasma membrane"/>
    <property type="evidence" value="ECO:0007669"/>
    <property type="project" value="UniProtKB-SubCell"/>
</dbReference>
<dbReference type="GO" id="GO:0015079">
    <property type="term" value="F:potassium ion transmembrane transporter activity"/>
    <property type="evidence" value="ECO:0007669"/>
    <property type="project" value="UniProtKB-UniRule"/>
</dbReference>
<dbReference type="GO" id="GO:0015293">
    <property type="term" value="F:symporter activity"/>
    <property type="evidence" value="ECO:0007669"/>
    <property type="project" value="UniProtKB-UniRule"/>
</dbReference>
<dbReference type="HAMAP" id="MF_01522">
    <property type="entry name" value="Kup"/>
    <property type="match status" value="1"/>
</dbReference>
<dbReference type="InterPro" id="IPR003855">
    <property type="entry name" value="K+_transporter"/>
</dbReference>
<dbReference type="InterPro" id="IPR053952">
    <property type="entry name" value="K_trans_C"/>
</dbReference>
<dbReference type="InterPro" id="IPR053951">
    <property type="entry name" value="K_trans_N"/>
</dbReference>
<dbReference type="InterPro" id="IPR023051">
    <property type="entry name" value="Kup"/>
</dbReference>
<dbReference type="PANTHER" id="PTHR30540:SF79">
    <property type="entry name" value="LOW AFFINITY POTASSIUM TRANSPORT SYSTEM PROTEIN KUP"/>
    <property type="match status" value="1"/>
</dbReference>
<dbReference type="PANTHER" id="PTHR30540">
    <property type="entry name" value="OSMOTIC STRESS POTASSIUM TRANSPORTER"/>
    <property type="match status" value="1"/>
</dbReference>
<dbReference type="Pfam" id="PF02705">
    <property type="entry name" value="K_trans"/>
    <property type="match status" value="1"/>
</dbReference>
<dbReference type="Pfam" id="PF22776">
    <property type="entry name" value="K_trans_C"/>
    <property type="match status" value="1"/>
</dbReference>
<protein>
    <recommendedName>
        <fullName evidence="1">Probable potassium transport system protein Kup</fullName>
    </recommendedName>
</protein>
<name>KUP_ACIBC</name>
<reference key="1">
    <citation type="journal article" date="2008" name="Antimicrob. Agents Chemother.">
        <title>Whole-genome pyrosequencing of an epidemic multidrug-resistant Acinetobacter baumannii strain belonging to the European clone II group.</title>
        <authorList>
            <person name="Iacono M."/>
            <person name="Villa L."/>
            <person name="Fortini D."/>
            <person name="Bordoni R."/>
            <person name="Imperi F."/>
            <person name="Bonnal R.J."/>
            <person name="Sicheritz-Ponten T."/>
            <person name="De Bellis G."/>
            <person name="Visca P."/>
            <person name="Cassone A."/>
            <person name="Carattoli A."/>
        </authorList>
    </citation>
    <scope>NUCLEOTIDE SEQUENCE [LARGE SCALE GENOMIC DNA]</scope>
    <source>
        <strain>ACICU</strain>
    </source>
</reference>
<evidence type="ECO:0000255" key="1">
    <source>
        <dbReference type="HAMAP-Rule" id="MF_01522"/>
    </source>
</evidence>
<feature type="chain" id="PRO_1000190256" description="Probable potassium transport system protein Kup">
    <location>
        <begin position="1"/>
        <end position="625"/>
    </location>
</feature>
<feature type="transmembrane region" description="Helical" evidence="1">
    <location>
        <begin position="13"/>
        <end position="33"/>
    </location>
</feature>
<feature type="transmembrane region" description="Helical" evidence="1">
    <location>
        <begin position="53"/>
        <end position="73"/>
    </location>
</feature>
<feature type="transmembrane region" description="Helical" evidence="1">
    <location>
        <begin position="103"/>
        <end position="123"/>
    </location>
</feature>
<feature type="transmembrane region" description="Helical" evidence="1">
    <location>
        <begin position="141"/>
        <end position="161"/>
    </location>
</feature>
<feature type="transmembrane region" description="Helical" evidence="1">
    <location>
        <begin position="172"/>
        <end position="192"/>
    </location>
</feature>
<feature type="transmembrane region" description="Helical" evidence="1">
    <location>
        <begin position="206"/>
        <end position="226"/>
    </location>
</feature>
<feature type="transmembrane region" description="Helical" evidence="1">
    <location>
        <begin position="250"/>
        <end position="270"/>
    </location>
</feature>
<feature type="transmembrane region" description="Helical" evidence="1">
    <location>
        <begin position="282"/>
        <end position="302"/>
    </location>
</feature>
<feature type="transmembrane region" description="Helical" evidence="1">
    <location>
        <begin position="340"/>
        <end position="360"/>
    </location>
</feature>
<feature type="transmembrane region" description="Helical" evidence="1">
    <location>
        <begin position="369"/>
        <end position="389"/>
    </location>
</feature>
<feature type="transmembrane region" description="Helical" evidence="1">
    <location>
        <begin position="400"/>
        <end position="420"/>
    </location>
</feature>
<feature type="transmembrane region" description="Helical" evidence="1">
    <location>
        <begin position="422"/>
        <end position="442"/>
    </location>
</feature>
<keyword id="KW-0997">Cell inner membrane</keyword>
<keyword id="KW-1003">Cell membrane</keyword>
<keyword id="KW-0406">Ion transport</keyword>
<keyword id="KW-0472">Membrane</keyword>
<keyword id="KW-0630">Potassium</keyword>
<keyword id="KW-0633">Potassium transport</keyword>
<keyword id="KW-0769">Symport</keyword>
<keyword id="KW-0812">Transmembrane</keyword>
<keyword id="KW-1133">Transmembrane helix</keyword>
<keyword id="KW-0813">Transport</keyword>